<dbReference type="EC" id="6.2.1.5" evidence="1"/>
<dbReference type="EMBL" id="CP001219">
    <property type="protein sequence ID" value="ACK78337.1"/>
    <property type="molecule type" value="Genomic_DNA"/>
</dbReference>
<dbReference type="RefSeq" id="WP_009564695.1">
    <property type="nucleotide sequence ID" value="NC_011761.1"/>
</dbReference>
<dbReference type="SMR" id="B7J4G8"/>
<dbReference type="STRING" id="243159.AFE_0425"/>
<dbReference type="PaxDb" id="243159-AFE_0425"/>
<dbReference type="GeneID" id="65279797"/>
<dbReference type="KEGG" id="afr:AFE_0425"/>
<dbReference type="eggNOG" id="COG0045">
    <property type="taxonomic scope" value="Bacteria"/>
</dbReference>
<dbReference type="HOGENOM" id="CLU_037430_0_2_6"/>
<dbReference type="UniPathway" id="UPA00223">
    <property type="reaction ID" value="UER00999"/>
</dbReference>
<dbReference type="Proteomes" id="UP000001362">
    <property type="component" value="Chromosome"/>
</dbReference>
<dbReference type="GO" id="GO:0005829">
    <property type="term" value="C:cytosol"/>
    <property type="evidence" value="ECO:0007669"/>
    <property type="project" value="TreeGrafter"/>
</dbReference>
<dbReference type="GO" id="GO:0042709">
    <property type="term" value="C:succinate-CoA ligase complex"/>
    <property type="evidence" value="ECO:0007669"/>
    <property type="project" value="TreeGrafter"/>
</dbReference>
<dbReference type="GO" id="GO:0005524">
    <property type="term" value="F:ATP binding"/>
    <property type="evidence" value="ECO:0007669"/>
    <property type="project" value="UniProtKB-UniRule"/>
</dbReference>
<dbReference type="GO" id="GO:0000287">
    <property type="term" value="F:magnesium ion binding"/>
    <property type="evidence" value="ECO:0007669"/>
    <property type="project" value="UniProtKB-UniRule"/>
</dbReference>
<dbReference type="GO" id="GO:0004775">
    <property type="term" value="F:succinate-CoA ligase (ADP-forming) activity"/>
    <property type="evidence" value="ECO:0007669"/>
    <property type="project" value="UniProtKB-UniRule"/>
</dbReference>
<dbReference type="GO" id="GO:0004776">
    <property type="term" value="F:succinate-CoA ligase (GDP-forming) activity"/>
    <property type="evidence" value="ECO:0007669"/>
    <property type="project" value="RHEA"/>
</dbReference>
<dbReference type="GO" id="GO:0006104">
    <property type="term" value="P:succinyl-CoA metabolic process"/>
    <property type="evidence" value="ECO:0007669"/>
    <property type="project" value="TreeGrafter"/>
</dbReference>
<dbReference type="GO" id="GO:0006099">
    <property type="term" value="P:tricarboxylic acid cycle"/>
    <property type="evidence" value="ECO:0007669"/>
    <property type="project" value="UniProtKB-UniRule"/>
</dbReference>
<dbReference type="FunFam" id="3.30.1490.20:FF:000002">
    <property type="entry name" value="Succinate--CoA ligase [ADP-forming] subunit beta"/>
    <property type="match status" value="1"/>
</dbReference>
<dbReference type="FunFam" id="3.30.470.20:FF:000002">
    <property type="entry name" value="Succinate--CoA ligase [ADP-forming] subunit beta"/>
    <property type="match status" value="1"/>
</dbReference>
<dbReference type="FunFam" id="3.40.50.261:FF:000001">
    <property type="entry name" value="Succinate--CoA ligase [ADP-forming] subunit beta"/>
    <property type="match status" value="1"/>
</dbReference>
<dbReference type="Gene3D" id="3.30.1490.20">
    <property type="entry name" value="ATP-grasp fold, A domain"/>
    <property type="match status" value="1"/>
</dbReference>
<dbReference type="Gene3D" id="3.30.470.20">
    <property type="entry name" value="ATP-grasp fold, B domain"/>
    <property type="match status" value="1"/>
</dbReference>
<dbReference type="Gene3D" id="3.40.50.261">
    <property type="entry name" value="Succinyl-CoA synthetase domains"/>
    <property type="match status" value="1"/>
</dbReference>
<dbReference type="HAMAP" id="MF_00558">
    <property type="entry name" value="Succ_CoA_beta"/>
    <property type="match status" value="1"/>
</dbReference>
<dbReference type="InterPro" id="IPR011761">
    <property type="entry name" value="ATP-grasp"/>
</dbReference>
<dbReference type="InterPro" id="IPR013650">
    <property type="entry name" value="ATP-grasp_succ-CoA_synth-type"/>
</dbReference>
<dbReference type="InterPro" id="IPR013815">
    <property type="entry name" value="ATP_grasp_subdomain_1"/>
</dbReference>
<dbReference type="InterPro" id="IPR017866">
    <property type="entry name" value="Succ-CoA_synthase_bsu_CS"/>
</dbReference>
<dbReference type="InterPro" id="IPR005811">
    <property type="entry name" value="SUCC_ACL_C"/>
</dbReference>
<dbReference type="InterPro" id="IPR005809">
    <property type="entry name" value="Succ_CoA_ligase-like_bsu"/>
</dbReference>
<dbReference type="InterPro" id="IPR016102">
    <property type="entry name" value="Succinyl-CoA_synth-like"/>
</dbReference>
<dbReference type="NCBIfam" id="NF001913">
    <property type="entry name" value="PRK00696.1"/>
    <property type="match status" value="1"/>
</dbReference>
<dbReference type="NCBIfam" id="TIGR01016">
    <property type="entry name" value="sucCoAbeta"/>
    <property type="match status" value="1"/>
</dbReference>
<dbReference type="PANTHER" id="PTHR11815:SF10">
    <property type="entry name" value="SUCCINATE--COA LIGASE [GDP-FORMING] SUBUNIT BETA, MITOCHONDRIAL"/>
    <property type="match status" value="1"/>
</dbReference>
<dbReference type="PANTHER" id="PTHR11815">
    <property type="entry name" value="SUCCINYL-COA SYNTHETASE BETA CHAIN"/>
    <property type="match status" value="1"/>
</dbReference>
<dbReference type="Pfam" id="PF08442">
    <property type="entry name" value="ATP-grasp_2"/>
    <property type="match status" value="1"/>
</dbReference>
<dbReference type="Pfam" id="PF00549">
    <property type="entry name" value="Ligase_CoA"/>
    <property type="match status" value="1"/>
</dbReference>
<dbReference type="PIRSF" id="PIRSF001554">
    <property type="entry name" value="SucCS_beta"/>
    <property type="match status" value="1"/>
</dbReference>
<dbReference type="SUPFAM" id="SSF56059">
    <property type="entry name" value="Glutathione synthetase ATP-binding domain-like"/>
    <property type="match status" value="1"/>
</dbReference>
<dbReference type="SUPFAM" id="SSF52210">
    <property type="entry name" value="Succinyl-CoA synthetase domains"/>
    <property type="match status" value="1"/>
</dbReference>
<dbReference type="PROSITE" id="PS50975">
    <property type="entry name" value="ATP_GRASP"/>
    <property type="match status" value="1"/>
</dbReference>
<dbReference type="PROSITE" id="PS01217">
    <property type="entry name" value="SUCCINYL_COA_LIG_3"/>
    <property type="match status" value="1"/>
</dbReference>
<organism>
    <name type="scientific">Acidithiobacillus ferrooxidans (strain ATCC 23270 / DSM 14882 / CIP 104768 / NCIMB 8455)</name>
    <name type="common">Ferrobacillus ferrooxidans (strain ATCC 23270)</name>
    <dbReference type="NCBI Taxonomy" id="243159"/>
    <lineage>
        <taxon>Bacteria</taxon>
        <taxon>Pseudomonadati</taxon>
        <taxon>Pseudomonadota</taxon>
        <taxon>Acidithiobacillia</taxon>
        <taxon>Acidithiobacillales</taxon>
        <taxon>Acidithiobacillaceae</taxon>
        <taxon>Acidithiobacillus</taxon>
    </lineage>
</organism>
<proteinExistence type="inferred from homology"/>
<keyword id="KW-0067">ATP-binding</keyword>
<keyword id="KW-0436">Ligase</keyword>
<keyword id="KW-0460">Magnesium</keyword>
<keyword id="KW-0479">Metal-binding</keyword>
<keyword id="KW-0547">Nucleotide-binding</keyword>
<keyword id="KW-1185">Reference proteome</keyword>
<keyword id="KW-0816">Tricarboxylic acid cycle</keyword>
<sequence>MNLHEYQAKRLLAEEGVPVPRAIPAFSVREAVNQARELGGPAWVVKAQVHAGGRGKAGGVRMVDSIAQVEKAAQELLGKPLVTAQTGPQGQHVAALLIEEPSRIARELYLALMVDRGQARITFLATREGGVDIEELAASRPEALHRVVVEPSTGFLPFQARQLGFQFGLDAGQVQQLTRIMQGMYRLAQRLDALMVEINPLAITAEGRLLALDAKVVMDDNALYRHPESDELFDSTQQDGREITARQFGLNYISLEGNIGCMVNGAGLAMATMDLIKLHGGEPANFLDVGGGAAADKVNQAFKLILSDTRVKAILVNIFGGITRCDLLAEGIIQAAAEVGLHLPVVVRLEGTRKEEGMALLRESGLSLITADGLTDAAMKAVAAAQG</sequence>
<protein>
    <recommendedName>
        <fullName evidence="1">Succinate--CoA ligase [ADP-forming] subunit beta</fullName>
        <ecNumber evidence="1">6.2.1.5</ecNumber>
    </recommendedName>
    <alternativeName>
        <fullName evidence="1">Succinyl-CoA synthetase subunit beta</fullName>
        <shortName evidence="1">SCS-beta</shortName>
    </alternativeName>
</protein>
<evidence type="ECO:0000255" key="1">
    <source>
        <dbReference type="HAMAP-Rule" id="MF_00558"/>
    </source>
</evidence>
<comment type="function">
    <text evidence="1">Succinyl-CoA synthetase functions in the citric acid cycle (TCA), coupling the hydrolysis of succinyl-CoA to the synthesis of either ATP or GTP and thus represents the only step of substrate-level phosphorylation in the TCA. The beta subunit provides nucleotide specificity of the enzyme and binds the substrate succinate, while the binding sites for coenzyme A and phosphate are found in the alpha subunit.</text>
</comment>
<comment type="catalytic activity">
    <reaction evidence="1">
        <text>succinate + ATP + CoA = succinyl-CoA + ADP + phosphate</text>
        <dbReference type="Rhea" id="RHEA:17661"/>
        <dbReference type="ChEBI" id="CHEBI:30031"/>
        <dbReference type="ChEBI" id="CHEBI:30616"/>
        <dbReference type="ChEBI" id="CHEBI:43474"/>
        <dbReference type="ChEBI" id="CHEBI:57287"/>
        <dbReference type="ChEBI" id="CHEBI:57292"/>
        <dbReference type="ChEBI" id="CHEBI:456216"/>
        <dbReference type="EC" id="6.2.1.5"/>
    </reaction>
    <physiologicalReaction direction="right-to-left" evidence="1">
        <dbReference type="Rhea" id="RHEA:17663"/>
    </physiologicalReaction>
</comment>
<comment type="catalytic activity">
    <reaction evidence="1">
        <text>GTP + succinate + CoA = succinyl-CoA + GDP + phosphate</text>
        <dbReference type="Rhea" id="RHEA:22120"/>
        <dbReference type="ChEBI" id="CHEBI:30031"/>
        <dbReference type="ChEBI" id="CHEBI:37565"/>
        <dbReference type="ChEBI" id="CHEBI:43474"/>
        <dbReference type="ChEBI" id="CHEBI:57287"/>
        <dbReference type="ChEBI" id="CHEBI:57292"/>
        <dbReference type="ChEBI" id="CHEBI:58189"/>
    </reaction>
    <physiologicalReaction direction="right-to-left" evidence="1">
        <dbReference type="Rhea" id="RHEA:22122"/>
    </physiologicalReaction>
</comment>
<comment type="cofactor">
    <cofactor evidence="1">
        <name>Mg(2+)</name>
        <dbReference type="ChEBI" id="CHEBI:18420"/>
    </cofactor>
    <text evidence="1">Binds 1 Mg(2+) ion per subunit.</text>
</comment>
<comment type="pathway">
    <text evidence="1">Carbohydrate metabolism; tricarboxylic acid cycle; succinate from succinyl-CoA (ligase route): step 1/1.</text>
</comment>
<comment type="subunit">
    <text evidence="1">Heterotetramer of two alpha and two beta subunits.</text>
</comment>
<comment type="similarity">
    <text evidence="1">Belongs to the succinate/malate CoA ligase beta subunit family.</text>
</comment>
<accession>B7J4G8</accession>
<reference key="1">
    <citation type="journal article" date="2008" name="BMC Genomics">
        <title>Acidithiobacillus ferrooxidans metabolism: from genome sequence to industrial applications.</title>
        <authorList>
            <person name="Valdes J."/>
            <person name="Pedroso I."/>
            <person name="Quatrini R."/>
            <person name="Dodson R.J."/>
            <person name="Tettelin H."/>
            <person name="Blake R. II"/>
            <person name="Eisen J.A."/>
            <person name="Holmes D.S."/>
        </authorList>
    </citation>
    <scope>NUCLEOTIDE SEQUENCE [LARGE SCALE GENOMIC DNA]</scope>
    <source>
        <strain>ATCC 23270 / DSM 14882 / CIP 104768 / NCIMB 8455</strain>
    </source>
</reference>
<gene>
    <name evidence="1" type="primary">sucC</name>
    <name type="ordered locus">AFE_0425</name>
</gene>
<feature type="chain" id="PRO_1000129151" description="Succinate--CoA ligase [ADP-forming] subunit beta">
    <location>
        <begin position="1"/>
        <end position="387"/>
    </location>
</feature>
<feature type="domain" description="ATP-grasp" evidence="1">
    <location>
        <begin position="9"/>
        <end position="244"/>
    </location>
</feature>
<feature type="binding site" evidence="1">
    <location>
        <position position="46"/>
    </location>
    <ligand>
        <name>ATP</name>
        <dbReference type="ChEBI" id="CHEBI:30616"/>
    </ligand>
</feature>
<feature type="binding site" evidence="1">
    <location>
        <begin position="53"/>
        <end position="55"/>
    </location>
    <ligand>
        <name>ATP</name>
        <dbReference type="ChEBI" id="CHEBI:30616"/>
    </ligand>
</feature>
<feature type="binding site" evidence="1">
    <location>
        <position position="99"/>
    </location>
    <ligand>
        <name>ATP</name>
        <dbReference type="ChEBI" id="CHEBI:30616"/>
    </ligand>
</feature>
<feature type="binding site" evidence="1">
    <location>
        <position position="102"/>
    </location>
    <ligand>
        <name>ATP</name>
        <dbReference type="ChEBI" id="CHEBI:30616"/>
    </ligand>
</feature>
<feature type="binding site" evidence="1">
    <location>
        <position position="107"/>
    </location>
    <ligand>
        <name>ATP</name>
        <dbReference type="ChEBI" id="CHEBI:30616"/>
    </ligand>
</feature>
<feature type="binding site" evidence="1">
    <location>
        <position position="199"/>
    </location>
    <ligand>
        <name>Mg(2+)</name>
        <dbReference type="ChEBI" id="CHEBI:18420"/>
    </ligand>
</feature>
<feature type="binding site" evidence="1">
    <location>
        <position position="213"/>
    </location>
    <ligand>
        <name>Mg(2+)</name>
        <dbReference type="ChEBI" id="CHEBI:18420"/>
    </ligand>
</feature>
<feature type="binding site" evidence="1">
    <location>
        <position position="264"/>
    </location>
    <ligand>
        <name>substrate</name>
        <note>ligand shared with subunit alpha</note>
    </ligand>
</feature>
<feature type="binding site" evidence="1">
    <location>
        <begin position="321"/>
        <end position="323"/>
    </location>
    <ligand>
        <name>substrate</name>
        <note>ligand shared with subunit alpha</note>
    </ligand>
</feature>
<name>SUCC_ACIF2</name>